<name>LEU3_CANBO</name>
<proteinExistence type="inferred from homology"/>
<sequence>MSIIEKKIVLLPGDHVGVEVVEEAVKILKSISEVKPEIQFKFENHLIGGAAIDATGVPLPDEALEAAKKSDAVLLGAVGGPKWGTGEVRPEQGLLKIRKELNLYANLRPCNFASDKLLDLSPLKSDIVKGTDFTVVRELVGGIYFGDRVEDDGSGFASDSESYSVPEVERITRMAAFLSLQNDPPLPIWSLDKANVLASSRLWRKTVDRVIKEEFPKLTVQHQLIDSAAMILVKSPTKLNGIVITNNMFGDIISDEASVIPGSLGLLPSASLASLPDTNQAFGLYEPCHGSAPDLPKNKVNPIATILSAAMMLKLSLNLVKEGNAVEEAVRKVLDQGIMTGDLGGNNSTTEVGDAIAKEVKLLLA</sequence>
<organism>
    <name type="scientific">Candida boidinii</name>
    <name type="common">Yeast</name>
    <dbReference type="NCBI Taxonomy" id="5477"/>
    <lineage>
        <taxon>Eukaryota</taxon>
        <taxon>Fungi</taxon>
        <taxon>Dikarya</taxon>
        <taxon>Ascomycota</taxon>
        <taxon>Saccharomycotina</taxon>
        <taxon>Pichiomycetes</taxon>
        <taxon>Pichiales</taxon>
        <taxon>Pichiaceae</taxon>
        <taxon>Ogataea</taxon>
        <taxon>Ogataea/Candida clade</taxon>
    </lineage>
</organism>
<protein>
    <recommendedName>
        <fullName>3-isopropylmalate dehydrogenase</fullName>
        <shortName>3-IPM-DH</shortName>
        <shortName>IMDH</shortName>
        <ecNumber>1.1.1.85</ecNumber>
    </recommendedName>
    <alternativeName>
        <fullName>Beta-IPM dehydrogenase</fullName>
    </alternativeName>
</protein>
<reference key="1">
    <citation type="journal article" date="1992" name="J. Bacteriol.">
        <title>Directed mutagenesis in an asporogenous methylotrophic yeast: cloning, sequencing, and one-step gene disruption of the 3-isopropylmalate dehydrogenase gene (LEU2) of Candida boidinii to derive doubly auxotrophic marker strains.</title>
        <authorList>
            <person name="Sakai Y."/>
            <person name="Tani Y."/>
        </authorList>
    </citation>
    <scope>NUCLEOTIDE SEQUENCE [GENOMIC DNA]</scope>
</reference>
<evidence type="ECO:0000250" key="1"/>
<evidence type="ECO:0000305" key="2"/>
<keyword id="KW-0028">Amino-acid biosynthesis</keyword>
<keyword id="KW-0100">Branched-chain amino acid biosynthesis</keyword>
<keyword id="KW-0963">Cytoplasm</keyword>
<keyword id="KW-0432">Leucine biosynthesis</keyword>
<keyword id="KW-0460">Magnesium</keyword>
<keyword id="KW-0464">Manganese</keyword>
<keyword id="KW-0479">Metal-binding</keyword>
<keyword id="KW-0520">NAD</keyword>
<keyword id="KW-0560">Oxidoreductase</keyword>
<feature type="chain" id="PRO_0000083602" description="3-isopropylmalate dehydrogenase">
    <location>
        <begin position="1"/>
        <end position="365"/>
    </location>
</feature>
<feature type="binding site" evidence="1">
    <location>
        <begin position="80"/>
        <end position="91"/>
    </location>
    <ligand>
        <name>NAD(+)</name>
        <dbReference type="ChEBI" id="CHEBI:57540"/>
    </ligand>
</feature>
<feature type="binding site" evidence="1">
    <location>
        <position position="98"/>
    </location>
    <ligand>
        <name>substrate</name>
    </ligand>
</feature>
<feature type="binding site" evidence="1">
    <location>
        <position position="108"/>
    </location>
    <ligand>
        <name>substrate</name>
    </ligand>
</feature>
<feature type="binding site" evidence="1">
    <location>
        <position position="137"/>
    </location>
    <ligand>
        <name>substrate</name>
    </ligand>
</feature>
<feature type="binding site" evidence="1">
    <location>
        <position position="226"/>
    </location>
    <ligand>
        <name>Mg(2+)</name>
        <dbReference type="ChEBI" id="CHEBI:18420"/>
    </ligand>
</feature>
<feature type="binding site" evidence="1">
    <location>
        <position position="226"/>
    </location>
    <ligand>
        <name>substrate</name>
    </ligand>
</feature>
<feature type="binding site" evidence="1">
    <location>
        <position position="251"/>
    </location>
    <ligand>
        <name>Mg(2+)</name>
        <dbReference type="ChEBI" id="CHEBI:18420"/>
    </ligand>
</feature>
<feature type="binding site" evidence="1">
    <location>
        <position position="255"/>
    </location>
    <ligand>
        <name>Mg(2+)</name>
        <dbReference type="ChEBI" id="CHEBI:18420"/>
    </ligand>
</feature>
<feature type="binding site" evidence="1">
    <location>
        <begin position="290"/>
        <end position="301"/>
    </location>
    <ligand>
        <name>NAD(+)</name>
        <dbReference type="ChEBI" id="CHEBI:57540"/>
    </ligand>
</feature>
<feature type="site" description="Important for catalysis" evidence="1">
    <location>
        <position position="144"/>
    </location>
</feature>
<feature type="site" description="Important for catalysis" evidence="1">
    <location>
        <position position="193"/>
    </location>
</feature>
<comment type="function">
    <text>Catalyzes the oxidation of 3-carboxy-2-hydroxy-4-methylpentanoate (3-isopropylmalate) to 3-carboxy-4-methyl-2-oxopentanoate. The product decarboxylates to 4-methyl-2 oxopentanoate.</text>
</comment>
<comment type="catalytic activity">
    <reaction>
        <text>(2R,3S)-3-isopropylmalate + NAD(+) = 4-methyl-2-oxopentanoate + CO2 + NADH</text>
        <dbReference type="Rhea" id="RHEA:32271"/>
        <dbReference type="ChEBI" id="CHEBI:16526"/>
        <dbReference type="ChEBI" id="CHEBI:17865"/>
        <dbReference type="ChEBI" id="CHEBI:35121"/>
        <dbReference type="ChEBI" id="CHEBI:57540"/>
        <dbReference type="ChEBI" id="CHEBI:57945"/>
        <dbReference type="EC" id="1.1.1.85"/>
    </reaction>
</comment>
<comment type="cofactor">
    <cofactor evidence="1">
        <name>Mg(2+)</name>
        <dbReference type="ChEBI" id="CHEBI:18420"/>
    </cofactor>
    <cofactor evidence="1">
        <name>Mn(2+)</name>
        <dbReference type="ChEBI" id="CHEBI:29035"/>
    </cofactor>
    <text evidence="1">Binds 1 Mg(2+) or Mn(2+) ion per subunit.</text>
</comment>
<comment type="pathway">
    <text>Amino-acid biosynthesis; L-leucine biosynthesis; L-leucine from 3-methyl-2-oxobutanoate: step 3/4.</text>
</comment>
<comment type="subunit">
    <text evidence="1">Homodimer.</text>
</comment>
<comment type="subcellular location">
    <subcellularLocation>
        <location>Cytoplasm</location>
    </subcellularLocation>
</comment>
<comment type="similarity">
    <text evidence="2">Belongs to the isocitrate and isopropylmalate dehydrogenases family.</text>
</comment>
<gene>
    <name type="primary">LEU2</name>
</gene>
<accession>Q01987</accession>
<dbReference type="EC" id="1.1.1.85"/>
<dbReference type="EMBL" id="M98832">
    <property type="protein sequence ID" value="AAA34349.1"/>
    <property type="molecule type" value="Genomic_DNA"/>
</dbReference>
<dbReference type="PIR" id="A43324">
    <property type="entry name" value="A43324"/>
</dbReference>
<dbReference type="SMR" id="Q01987"/>
<dbReference type="OrthoDB" id="419183at2759"/>
<dbReference type="BRENDA" id="1.1.1.85">
    <property type="organism ID" value="1100"/>
</dbReference>
<dbReference type="UniPathway" id="UPA00048">
    <property type="reaction ID" value="UER00072"/>
</dbReference>
<dbReference type="GO" id="GO:0005829">
    <property type="term" value="C:cytosol"/>
    <property type="evidence" value="ECO:0007669"/>
    <property type="project" value="TreeGrafter"/>
</dbReference>
<dbReference type="GO" id="GO:0003862">
    <property type="term" value="F:3-isopropylmalate dehydrogenase activity"/>
    <property type="evidence" value="ECO:0007669"/>
    <property type="project" value="UniProtKB-EC"/>
</dbReference>
<dbReference type="GO" id="GO:0000287">
    <property type="term" value="F:magnesium ion binding"/>
    <property type="evidence" value="ECO:0007669"/>
    <property type="project" value="InterPro"/>
</dbReference>
<dbReference type="GO" id="GO:0051287">
    <property type="term" value="F:NAD binding"/>
    <property type="evidence" value="ECO:0007669"/>
    <property type="project" value="InterPro"/>
</dbReference>
<dbReference type="GO" id="GO:0009098">
    <property type="term" value="P:L-leucine biosynthetic process"/>
    <property type="evidence" value="ECO:0007669"/>
    <property type="project" value="UniProtKB-UniPathway"/>
</dbReference>
<dbReference type="FunFam" id="3.40.718.10:FF:000006">
    <property type="entry name" value="3-isopropylmalate dehydrogenase"/>
    <property type="match status" value="1"/>
</dbReference>
<dbReference type="Gene3D" id="3.40.718.10">
    <property type="entry name" value="Isopropylmalate Dehydrogenase"/>
    <property type="match status" value="1"/>
</dbReference>
<dbReference type="InterPro" id="IPR019818">
    <property type="entry name" value="IsoCit/isopropylmalate_DH_CS"/>
</dbReference>
<dbReference type="InterPro" id="IPR024084">
    <property type="entry name" value="IsoPropMal-DH-like_dom"/>
</dbReference>
<dbReference type="InterPro" id="IPR004429">
    <property type="entry name" value="Isopropylmalate_DH"/>
</dbReference>
<dbReference type="NCBIfam" id="TIGR00169">
    <property type="entry name" value="leuB"/>
    <property type="match status" value="1"/>
</dbReference>
<dbReference type="PANTHER" id="PTHR42979">
    <property type="entry name" value="3-ISOPROPYLMALATE DEHYDROGENASE"/>
    <property type="match status" value="1"/>
</dbReference>
<dbReference type="PANTHER" id="PTHR42979:SF1">
    <property type="entry name" value="3-ISOPROPYLMALATE DEHYDROGENASE"/>
    <property type="match status" value="1"/>
</dbReference>
<dbReference type="Pfam" id="PF00180">
    <property type="entry name" value="Iso_dh"/>
    <property type="match status" value="1"/>
</dbReference>
<dbReference type="SMART" id="SM01329">
    <property type="entry name" value="Iso_dh"/>
    <property type="match status" value="1"/>
</dbReference>
<dbReference type="SUPFAM" id="SSF53659">
    <property type="entry name" value="Isocitrate/Isopropylmalate dehydrogenase-like"/>
    <property type="match status" value="1"/>
</dbReference>
<dbReference type="PROSITE" id="PS00470">
    <property type="entry name" value="IDH_IMDH"/>
    <property type="match status" value="1"/>
</dbReference>